<organism>
    <name type="scientific">Escherichia coli O1:K1 / APEC</name>
    <dbReference type="NCBI Taxonomy" id="405955"/>
    <lineage>
        <taxon>Bacteria</taxon>
        <taxon>Pseudomonadati</taxon>
        <taxon>Pseudomonadota</taxon>
        <taxon>Gammaproteobacteria</taxon>
        <taxon>Enterobacterales</taxon>
        <taxon>Enterobacteriaceae</taxon>
        <taxon>Escherichia</taxon>
    </lineage>
</organism>
<dbReference type="EC" id="2.7.7.4" evidence="1"/>
<dbReference type="EMBL" id="CP000468">
    <property type="protein sequence ID" value="ABJ02186.1"/>
    <property type="molecule type" value="Genomic_DNA"/>
</dbReference>
<dbReference type="RefSeq" id="WP_000372397.1">
    <property type="nucleotide sequence ID" value="NZ_CADILS010000024.1"/>
</dbReference>
<dbReference type="SMR" id="A1AEU6"/>
<dbReference type="KEGG" id="ecv:APECO1_3772"/>
<dbReference type="HOGENOM" id="CLU_043026_0_0_6"/>
<dbReference type="UniPathway" id="UPA00140">
    <property type="reaction ID" value="UER00204"/>
</dbReference>
<dbReference type="Proteomes" id="UP000008216">
    <property type="component" value="Chromosome"/>
</dbReference>
<dbReference type="GO" id="GO:0005524">
    <property type="term" value="F:ATP binding"/>
    <property type="evidence" value="ECO:0007669"/>
    <property type="project" value="UniProtKB-KW"/>
</dbReference>
<dbReference type="GO" id="GO:0004781">
    <property type="term" value="F:sulfate adenylyltransferase (ATP) activity"/>
    <property type="evidence" value="ECO:0007669"/>
    <property type="project" value="UniProtKB-UniRule"/>
</dbReference>
<dbReference type="GO" id="GO:0070814">
    <property type="term" value="P:hydrogen sulfide biosynthetic process"/>
    <property type="evidence" value="ECO:0007669"/>
    <property type="project" value="UniProtKB-UniRule"/>
</dbReference>
<dbReference type="GO" id="GO:0000103">
    <property type="term" value="P:sulfate assimilation"/>
    <property type="evidence" value="ECO:0007669"/>
    <property type="project" value="UniProtKB-UniRule"/>
</dbReference>
<dbReference type="CDD" id="cd23946">
    <property type="entry name" value="Sulfate_adenylyltransferase_2"/>
    <property type="match status" value="1"/>
</dbReference>
<dbReference type="FunFam" id="3.40.50.620:FF:000002">
    <property type="entry name" value="Sulfate adenylyltransferase subunit 2"/>
    <property type="match status" value="1"/>
</dbReference>
<dbReference type="Gene3D" id="3.40.50.620">
    <property type="entry name" value="HUPs"/>
    <property type="match status" value="1"/>
</dbReference>
<dbReference type="HAMAP" id="MF_00064">
    <property type="entry name" value="Sulf_adenylyltr_sub2"/>
    <property type="match status" value="1"/>
</dbReference>
<dbReference type="InterPro" id="IPR002500">
    <property type="entry name" value="PAPS_reduct_dom"/>
</dbReference>
<dbReference type="InterPro" id="IPR014729">
    <property type="entry name" value="Rossmann-like_a/b/a_fold"/>
</dbReference>
<dbReference type="InterPro" id="IPR011784">
    <property type="entry name" value="SO4_adenylTrfase_ssu"/>
</dbReference>
<dbReference type="InterPro" id="IPR050128">
    <property type="entry name" value="Sulfate_adenylyltrnsfr_sub2"/>
</dbReference>
<dbReference type="NCBIfam" id="TIGR02039">
    <property type="entry name" value="CysD"/>
    <property type="match status" value="1"/>
</dbReference>
<dbReference type="NCBIfam" id="NF003587">
    <property type="entry name" value="PRK05253.1"/>
    <property type="match status" value="1"/>
</dbReference>
<dbReference type="NCBIfam" id="NF009214">
    <property type="entry name" value="PRK12563.1"/>
    <property type="match status" value="1"/>
</dbReference>
<dbReference type="PANTHER" id="PTHR43196">
    <property type="entry name" value="SULFATE ADENYLYLTRANSFERASE SUBUNIT 2"/>
    <property type="match status" value="1"/>
</dbReference>
<dbReference type="PANTHER" id="PTHR43196:SF1">
    <property type="entry name" value="SULFATE ADENYLYLTRANSFERASE SUBUNIT 2"/>
    <property type="match status" value="1"/>
</dbReference>
<dbReference type="Pfam" id="PF01507">
    <property type="entry name" value="PAPS_reduct"/>
    <property type="match status" value="1"/>
</dbReference>
<dbReference type="PIRSF" id="PIRSF002936">
    <property type="entry name" value="CysDAde_trans"/>
    <property type="match status" value="1"/>
</dbReference>
<dbReference type="SUPFAM" id="SSF52402">
    <property type="entry name" value="Adenine nucleotide alpha hydrolases-like"/>
    <property type="match status" value="1"/>
</dbReference>
<sequence length="302" mass="35192">MDQKRLTHLRQLEAESIHIIREVAAEFSNPVMLYSIGKDSSVMLHLARKAFYPGTLPFPLLHVDTGWKFREMYEFRDRTAKAYGCELLVHKNPEGVAMGINPFVHGSAKHTDIMKTEGLKQALNKYGFDAAFGGARRDEEKSRAKERIYSFRDRFHRWDPKNQRPELWHNYNGQINKGESIRVFPLSNWTEQDIWQYIWLENIDIVPLYLAAERPVLERDGMLMMIDDNRINLQSGEVIKKRMVRFRTLGCWPLTGAVESNAQTLPEIIEEMLVSTTSERQGRVIDRDQAGSMELKKRQGYF</sequence>
<accession>A1AEU6</accession>
<proteinExistence type="inferred from homology"/>
<comment type="function">
    <text evidence="1">With CysN forms the ATP sulfurylase (ATPS) that catalyzes the adenylation of sulfate producing adenosine 5'-phosphosulfate (APS) and diphosphate, the first enzymatic step in sulfur assimilation pathway. APS synthesis involves the formation of a high-energy phosphoric-sulfuric acid anhydride bond driven by GTP hydrolysis by CysN coupled to ATP hydrolysis by CysD.</text>
</comment>
<comment type="catalytic activity">
    <reaction evidence="1">
        <text>sulfate + ATP + H(+) = adenosine 5'-phosphosulfate + diphosphate</text>
        <dbReference type="Rhea" id="RHEA:18133"/>
        <dbReference type="ChEBI" id="CHEBI:15378"/>
        <dbReference type="ChEBI" id="CHEBI:16189"/>
        <dbReference type="ChEBI" id="CHEBI:30616"/>
        <dbReference type="ChEBI" id="CHEBI:33019"/>
        <dbReference type="ChEBI" id="CHEBI:58243"/>
        <dbReference type="EC" id="2.7.7.4"/>
    </reaction>
</comment>
<comment type="pathway">
    <text evidence="1">Sulfur metabolism; hydrogen sulfide biosynthesis; sulfite from sulfate: step 1/3.</text>
</comment>
<comment type="subunit">
    <text evidence="1">Heterodimer composed of CysD, the smaller subunit, and CysN.</text>
</comment>
<comment type="similarity">
    <text evidence="1">Belongs to the PAPS reductase family. CysD subfamily.</text>
</comment>
<protein>
    <recommendedName>
        <fullName evidence="1">Sulfate adenylyltransferase subunit 2</fullName>
        <ecNumber evidence="1">2.7.7.4</ecNumber>
    </recommendedName>
    <alternativeName>
        <fullName evidence="1">ATP-sulfurylase small subunit</fullName>
    </alternativeName>
    <alternativeName>
        <fullName evidence="1">Sulfate adenylate transferase</fullName>
        <shortName evidence="1">SAT</shortName>
    </alternativeName>
</protein>
<gene>
    <name evidence="1" type="primary">cysD</name>
    <name type="ordered locus">Ecok1_26920</name>
    <name type="ORF">APECO1_3772</name>
</gene>
<evidence type="ECO:0000255" key="1">
    <source>
        <dbReference type="HAMAP-Rule" id="MF_00064"/>
    </source>
</evidence>
<reference key="1">
    <citation type="journal article" date="2007" name="J. Bacteriol.">
        <title>The genome sequence of avian pathogenic Escherichia coli strain O1:K1:H7 shares strong similarities with human extraintestinal pathogenic E. coli genomes.</title>
        <authorList>
            <person name="Johnson T.J."/>
            <person name="Kariyawasam S."/>
            <person name="Wannemuehler Y."/>
            <person name="Mangiamele P."/>
            <person name="Johnson S.J."/>
            <person name="Doetkott C."/>
            <person name="Skyberg J.A."/>
            <person name="Lynne A.M."/>
            <person name="Johnson J.R."/>
            <person name="Nolan L.K."/>
        </authorList>
    </citation>
    <scope>NUCLEOTIDE SEQUENCE [LARGE SCALE GENOMIC DNA]</scope>
</reference>
<feature type="chain" id="PRO_1000008955" description="Sulfate adenylyltransferase subunit 2">
    <location>
        <begin position="1"/>
        <end position="302"/>
    </location>
</feature>
<keyword id="KW-0067">ATP-binding</keyword>
<keyword id="KW-0547">Nucleotide-binding</keyword>
<keyword id="KW-0548">Nucleotidyltransferase</keyword>
<keyword id="KW-1185">Reference proteome</keyword>
<keyword id="KW-0808">Transferase</keyword>
<name>CYSD_ECOK1</name>